<reference key="1">
    <citation type="journal article" date="1999" name="Nature">
        <title>Sequence and analysis of chromosome 2 of the plant Arabidopsis thaliana.</title>
        <authorList>
            <person name="Lin X."/>
            <person name="Kaul S."/>
            <person name="Rounsley S.D."/>
            <person name="Shea T.P."/>
            <person name="Benito M.-I."/>
            <person name="Town C.D."/>
            <person name="Fujii C.Y."/>
            <person name="Mason T.M."/>
            <person name="Bowman C.L."/>
            <person name="Barnstead M.E."/>
            <person name="Feldblyum T.V."/>
            <person name="Buell C.R."/>
            <person name="Ketchum K.A."/>
            <person name="Lee J.J."/>
            <person name="Ronning C.M."/>
            <person name="Koo H.L."/>
            <person name="Moffat K.S."/>
            <person name="Cronin L.A."/>
            <person name="Shen M."/>
            <person name="Pai G."/>
            <person name="Van Aken S."/>
            <person name="Umayam L."/>
            <person name="Tallon L.J."/>
            <person name="Gill J.E."/>
            <person name="Adams M.D."/>
            <person name="Carrera A.J."/>
            <person name="Creasy T.H."/>
            <person name="Goodman H.M."/>
            <person name="Somerville C.R."/>
            <person name="Copenhaver G.P."/>
            <person name="Preuss D."/>
            <person name="Nierman W.C."/>
            <person name="White O."/>
            <person name="Eisen J.A."/>
            <person name="Salzberg S.L."/>
            <person name="Fraser C.M."/>
            <person name="Venter J.C."/>
        </authorList>
    </citation>
    <scope>NUCLEOTIDE SEQUENCE [LARGE SCALE GENOMIC DNA]</scope>
    <source>
        <strain>cv. Columbia</strain>
    </source>
</reference>
<reference key="2">
    <citation type="journal article" date="2017" name="Plant J.">
        <title>Araport11: a complete reannotation of the Arabidopsis thaliana reference genome.</title>
        <authorList>
            <person name="Cheng C.Y."/>
            <person name="Krishnakumar V."/>
            <person name="Chan A.P."/>
            <person name="Thibaud-Nissen F."/>
            <person name="Schobel S."/>
            <person name="Town C.D."/>
        </authorList>
    </citation>
    <scope>GENOME REANNOTATION</scope>
    <source>
        <strain>cv. Columbia</strain>
    </source>
</reference>
<reference key="3">
    <citation type="journal article" date="2002" name="Genome Biol.">
        <title>Evaluation and classification of RING-finger domains encoded by the Arabidopsis genome.</title>
        <authorList>
            <person name="Kosarev P."/>
            <person name="Mayer K.F.X."/>
            <person name="Hardtke C.S."/>
        </authorList>
    </citation>
    <scope>GENE FAMILY ORGANIZATION</scope>
</reference>
<reference key="4">
    <citation type="journal article" date="2005" name="Development">
        <title>Genetic and molecular identification of genes required for female gametophyte development and function in Arabidopsis.</title>
        <authorList>
            <person name="Pagnussat G.C."/>
            <person name="Yu H.-J."/>
            <person name="Ngo Q.A."/>
            <person name="Rajani S."/>
            <person name="Mayalagu S."/>
            <person name="Johnson C.S."/>
            <person name="Capron A."/>
            <person name="Xie L.-F."/>
            <person name="Ye D."/>
            <person name="Sundaresan V."/>
        </authorList>
    </citation>
    <scope>FUNCTION</scope>
</reference>
<reference key="5">
    <citation type="journal article" date="2006" name="J. Mol. Evol.">
        <title>The ATL gene family from Arabidopsis thaliana and Oryza sativa comprises a large number of putative ubiquitin ligases of the RING-H2 type.</title>
        <authorList>
            <person name="Serrano M."/>
            <person name="Parra S."/>
            <person name="Alcaraz L.D."/>
            <person name="Guzman P."/>
        </authorList>
    </citation>
    <scope>NOMENCLATURE</scope>
    <scope>GENE FAMILY ORGANIZATION</scope>
</reference>
<proteinExistence type="inferred from homology"/>
<dbReference type="EC" id="2.3.2.27" evidence="6"/>
<dbReference type="EMBL" id="AC005724">
    <property type="protein sequence ID" value="AAD08934.1"/>
    <property type="molecule type" value="Genomic_DNA"/>
</dbReference>
<dbReference type="EMBL" id="CP002685">
    <property type="protein sequence ID" value="AEC06789.1"/>
    <property type="molecule type" value="Genomic_DNA"/>
</dbReference>
<dbReference type="PIR" id="H84566">
    <property type="entry name" value="H84566"/>
</dbReference>
<dbReference type="RefSeq" id="NP_179455.1">
    <property type="nucleotide sequence ID" value="NM_127421.2"/>
</dbReference>
<dbReference type="SMR" id="Q9ZV53"/>
<dbReference type="FunCoup" id="Q9ZV53">
    <property type="interactions" value="161"/>
</dbReference>
<dbReference type="STRING" id="3702.Q9ZV53"/>
<dbReference type="iPTMnet" id="Q9ZV53"/>
<dbReference type="PaxDb" id="3702-AT2G18650.1"/>
<dbReference type="EnsemblPlants" id="AT2G18650.1">
    <property type="protein sequence ID" value="AT2G18650.1"/>
    <property type="gene ID" value="AT2G18650"/>
</dbReference>
<dbReference type="GeneID" id="816380"/>
<dbReference type="Gramene" id="AT2G18650.1">
    <property type="protein sequence ID" value="AT2G18650.1"/>
    <property type="gene ID" value="AT2G18650"/>
</dbReference>
<dbReference type="KEGG" id="ath:AT2G18650"/>
<dbReference type="Araport" id="AT2G18650"/>
<dbReference type="TAIR" id="AT2G18650">
    <property type="gene designation" value="MEE16"/>
</dbReference>
<dbReference type="eggNOG" id="KOG0800">
    <property type="taxonomic scope" value="Eukaryota"/>
</dbReference>
<dbReference type="HOGENOM" id="CLU_034332_0_0_1"/>
<dbReference type="InParanoid" id="Q9ZV53"/>
<dbReference type="OMA" id="YEYIMDQ"/>
<dbReference type="PhylomeDB" id="Q9ZV53"/>
<dbReference type="UniPathway" id="UPA00143"/>
<dbReference type="PRO" id="PR:Q9ZV53"/>
<dbReference type="Proteomes" id="UP000006548">
    <property type="component" value="Chromosome 2"/>
</dbReference>
<dbReference type="ExpressionAtlas" id="Q9ZV53">
    <property type="expression patterns" value="baseline and differential"/>
</dbReference>
<dbReference type="GO" id="GO:0016020">
    <property type="term" value="C:membrane"/>
    <property type="evidence" value="ECO:0007669"/>
    <property type="project" value="UniProtKB-SubCell"/>
</dbReference>
<dbReference type="GO" id="GO:0016740">
    <property type="term" value="F:transferase activity"/>
    <property type="evidence" value="ECO:0007669"/>
    <property type="project" value="UniProtKB-KW"/>
</dbReference>
<dbReference type="GO" id="GO:0008270">
    <property type="term" value="F:zinc ion binding"/>
    <property type="evidence" value="ECO:0007669"/>
    <property type="project" value="UniProtKB-KW"/>
</dbReference>
<dbReference type="GO" id="GO:0009793">
    <property type="term" value="P:embryo development ending in seed dormancy"/>
    <property type="evidence" value="ECO:0000315"/>
    <property type="project" value="TAIR"/>
</dbReference>
<dbReference type="GO" id="GO:0016567">
    <property type="term" value="P:protein ubiquitination"/>
    <property type="evidence" value="ECO:0007669"/>
    <property type="project" value="UniProtKB-UniPathway"/>
</dbReference>
<dbReference type="CDD" id="cd16461">
    <property type="entry name" value="RING-H2_EL5-like"/>
    <property type="match status" value="1"/>
</dbReference>
<dbReference type="FunFam" id="3.30.40.10:FF:000187">
    <property type="entry name" value="E3 ubiquitin-protein ligase ATL6"/>
    <property type="match status" value="1"/>
</dbReference>
<dbReference type="Gene3D" id="3.30.40.10">
    <property type="entry name" value="Zinc/RING finger domain, C3HC4 (zinc finger)"/>
    <property type="match status" value="1"/>
</dbReference>
<dbReference type="InterPro" id="IPR001841">
    <property type="entry name" value="Znf_RING"/>
</dbReference>
<dbReference type="InterPro" id="IPR013083">
    <property type="entry name" value="Znf_RING/FYVE/PHD"/>
</dbReference>
<dbReference type="PANTHER" id="PTHR45768">
    <property type="entry name" value="E3 UBIQUITIN-PROTEIN LIGASE RNF13-LIKE"/>
    <property type="match status" value="1"/>
</dbReference>
<dbReference type="PANTHER" id="PTHR45768:SF28">
    <property type="entry name" value="RING-H2 FINGER PROTEIN ATL49-RELATED"/>
    <property type="match status" value="1"/>
</dbReference>
<dbReference type="Pfam" id="PF13639">
    <property type="entry name" value="zf-RING_2"/>
    <property type="match status" value="1"/>
</dbReference>
<dbReference type="SMART" id="SM00184">
    <property type="entry name" value="RING"/>
    <property type="match status" value="1"/>
</dbReference>
<dbReference type="SUPFAM" id="SSF57850">
    <property type="entry name" value="RING/U-box"/>
    <property type="match status" value="1"/>
</dbReference>
<dbReference type="PROSITE" id="PS50089">
    <property type="entry name" value="ZF_RING_2"/>
    <property type="match status" value="1"/>
</dbReference>
<accession>Q9ZV53</accession>
<protein>
    <recommendedName>
        <fullName>Putative RING-H2 finger protein ATL49</fullName>
        <ecNumber evidence="6">2.3.2.27</ecNumber>
    </recommendedName>
    <alternativeName>
        <fullName>Protein MATERNAL EFFECT EMBRYO ARREST 16</fullName>
    </alternativeName>
    <alternativeName>
        <fullName evidence="6">RING-type E3 ubiquitin transferase ATL49</fullName>
    </alternativeName>
</protein>
<sequence>MNKILPEMKSTQNLISSSPPPPLIPLKSNTSLSNLNSKITPNILLIIIILSIIFFISGLLHILVKFLLTPSRESREDYFDNVTALQGQLQQLFNLHDSGVDQSLIDTLPVFHYKSIVGLKISPFDCPVCLCEFETEDKLRLLPKCSHAFHVECIDTWLLSHSTCPLCRSNLLSGFSSHHNLSSSYLLVLESEQSSRDMVPVLESNSQLGYDVNNDSESTRIRSGRKSCDPDGDMDGLDEKVVPLEVKLGKFRNIDHVGEGSDQKKNSISGNSKNVDGRRCLSMGSYEYIMDQEATLKVHVSTKKLSGKDRVPSHRTVMSECGFDPTVKGIEKSVVERESFSLSKIWLRGKKEKQKGTSARDSDCSFVSSSSLRFPNHRIPPEESLKSENSESLETKTPSFARRTMHWLAGRQNKIVQPSTSNV</sequence>
<feature type="chain" id="PRO_0000055777" description="Putative RING-H2 finger protein ATL49">
    <location>
        <begin position="1"/>
        <end position="423"/>
    </location>
</feature>
<feature type="transmembrane region" description="Helical" evidence="2">
    <location>
        <begin position="43"/>
        <end position="63"/>
    </location>
</feature>
<feature type="zinc finger region" description="RING-type; atypical" evidence="3">
    <location>
        <begin position="126"/>
        <end position="168"/>
    </location>
</feature>
<feature type="region of interest" description="Disordered" evidence="4">
    <location>
        <begin position="213"/>
        <end position="236"/>
    </location>
</feature>
<feature type="region of interest" description="Disordered" evidence="4">
    <location>
        <begin position="377"/>
        <end position="399"/>
    </location>
</feature>
<feature type="compositionally biased region" description="Basic and acidic residues" evidence="4">
    <location>
        <begin position="379"/>
        <end position="389"/>
    </location>
</feature>
<comment type="function">
    <text evidence="5">May be involved in female gametophyte development.</text>
</comment>
<comment type="catalytic activity">
    <reaction evidence="6">
        <text>S-ubiquitinyl-[E2 ubiquitin-conjugating enzyme]-L-cysteine + [acceptor protein]-L-lysine = [E2 ubiquitin-conjugating enzyme]-L-cysteine + N(6)-ubiquitinyl-[acceptor protein]-L-lysine.</text>
        <dbReference type="EC" id="2.3.2.27"/>
    </reaction>
</comment>
<comment type="pathway">
    <text>Protein modification; protein ubiquitination.</text>
</comment>
<comment type="subcellular location">
    <subcellularLocation>
        <location evidence="6">Membrane</location>
        <topology evidence="6">Single-pass membrane protein</topology>
    </subcellularLocation>
</comment>
<comment type="domain">
    <text evidence="1">The RING-type zinc finger domain mediates binding to an E2 ubiquitin-conjugating enzyme.</text>
</comment>
<comment type="similarity">
    <text evidence="6">Belongs to the RING-type zinc finger family. ATL subfamily.</text>
</comment>
<keyword id="KW-0472">Membrane</keyword>
<keyword id="KW-0479">Metal-binding</keyword>
<keyword id="KW-1185">Reference proteome</keyword>
<keyword id="KW-0808">Transferase</keyword>
<keyword id="KW-0812">Transmembrane</keyword>
<keyword id="KW-1133">Transmembrane helix</keyword>
<keyword id="KW-0833">Ubl conjugation pathway</keyword>
<keyword id="KW-0862">Zinc</keyword>
<keyword id="KW-0863">Zinc-finger</keyword>
<gene>
    <name type="primary">ATL49</name>
    <name type="synonym">MEE16</name>
    <name type="ordered locus">At2g18650</name>
    <name type="ORF">MSF3.3</name>
</gene>
<name>ATL49_ARATH</name>
<evidence type="ECO:0000250" key="1"/>
<evidence type="ECO:0000255" key="2"/>
<evidence type="ECO:0000255" key="3">
    <source>
        <dbReference type="PROSITE-ProRule" id="PRU00175"/>
    </source>
</evidence>
<evidence type="ECO:0000256" key="4">
    <source>
        <dbReference type="SAM" id="MobiDB-lite"/>
    </source>
</evidence>
<evidence type="ECO:0000269" key="5">
    <source>
    </source>
</evidence>
<evidence type="ECO:0000305" key="6"/>
<organism>
    <name type="scientific">Arabidopsis thaliana</name>
    <name type="common">Mouse-ear cress</name>
    <dbReference type="NCBI Taxonomy" id="3702"/>
    <lineage>
        <taxon>Eukaryota</taxon>
        <taxon>Viridiplantae</taxon>
        <taxon>Streptophyta</taxon>
        <taxon>Embryophyta</taxon>
        <taxon>Tracheophyta</taxon>
        <taxon>Spermatophyta</taxon>
        <taxon>Magnoliopsida</taxon>
        <taxon>eudicotyledons</taxon>
        <taxon>Gunneridae</taxon>
        <taxon>Pentapetalae</taxon>
        <taxon>rosids</taxon>
        <taxon>malvids</taxon>
        <taxon>Brassicales</taxon>
        <taxon>Brassicaceae</taxon>
        <taxon>Camelineae</taxon>
        <taxon>Arabidopsis</taxon>
    </lineage>
</organism>